<dbReference type="EC" id="2.7.2.11" evidence="1"/>
<dbReference type="EMBL" id="AE008917">
    <property type="protein sequence ID" value="AAL51389.1"/>
    <property type="molecule type" value="Genomic_DNA"/>
</dbReference>
<dbReference type="PIR" id="AB3278">
    <property type="entry name" value="AB3278"/>
</dbReference>
<dbReference type="RefSeq" id="WP_004684325.1">
    <property type="nucleotide sequence ID" value="NZ_GG703781.1"/>
</dbReference>
<dbReference type="SMR" id="P65790"/>
<dbReference type="GeneID" id="97533036"/>
<dbReference type="KEGG" id="bme:BMEI0207"/>
<dbReference type="KEGG" id="bmel:DK63_1223"/>
<dbReference type="PATRIC" id="fig|224914.52.peg.1295"/>
<dbReference type="eggNOG" id="COG0263">
    <property type="taxonomic scope" value="Bacteria"/>
</dbReference>
<dbReference type="PhylomeDB" id="P65790"/>
<dbReference type="UniPathway" id="UPA00098">
    <property type="reaction ID" value="UER00359"/>
</dbReference>
<dbReference type="Proteomes" id="UP000000419">
    <property type="component" value="Chromosome I"/>
</dbReference>
<dbReference type="GO" id="GO:0005829">
    <property type="term" value="C:cytosol"/>
    <property type="evidence" value="ECO:0007669"/>
    <property type="project" value="TreeGrafter"/>
</dbReference>
<dbReference type="GO" id="GO:0005524">
    <property type="term" value="F:ATP binding"/>
    <property type="evidence" value="ECO:0007669"/>
    <property type="project" value="UniProtKB-KW"/>
</dbReference>
<dbReference type="GO" id="GO:0004349">
    <property type="term" value="F:glutamate 5-kinase activity"/>
    <property type="evidence" value="ECO:0007669"/>
    <property type="project" value="UniProtKB-UniRule"/>
</dbReference>
<dbReference type="GO" id="GO:0003723">
    <property type="term" value="F:RNA binding"/>
    <property type="evidence" value="ECO:0007669"/>
    <property type="project" value="InterPro"/>
</dbReference>
<dbReference type="GO" id="GO:0055129">
    <property type="term" value="P:L-proline biosynthetic process"/>
    <property type="evidence" value="ECO:0007669"/>
    <property type="project" value="UniProtKB-UniRule"/>
</dbReference>
<dbReference type="CDD" id="cd04242">
    <property type="entry name" value="AAK_G5K_ProB"/>
    <property type="match status" value="1"/>
</dbReference>
<dbReference type="CDD" id="cd21157">
    <property type="entry name" value="PUA_G5K"/>
    <property type="match status" value="1"/>
</dbReference>
<dbReference type="FunFam" id="2.30.130.10:FF:000007">
    <property type="entry name" value="Glutamate 5-kinase"/>
    <property type="match status" value="1"/>
</dbReference>
<dbReference type="FunFam" id="3.40.1160.10:FF:000018">
    <property type="entry name" value="Glutamate 5-kinase"/>
    <property type="match status" value="1"/>
</dbReference>
<dbReference type="Gene3D" id="3.40.1160.10">
    <property type="entry name" value="Acetylglutamate kinase-like"/>
    <property type="match status" value="1"/>
</dbReference>
<dbReference type="Gene3D" id="2.30.130.10">
    <property type="entry name" value="PUA domain"/>
    <property type="match status" value="1"/>
</dbReference>
<dbReference type="HAMAP" id="MF_00456">
    <property type="entry name" value="ProB"/>
    <property type="match status" value="1"/>
</dbReference>
<dbReference type="InterPro" id="IPR036393">
    <property type="entry name" value="AceGlu_kinase-like_sf"/>
</dbReference>
<dbReference type="InterPro" id="IPR001048">
    <property type="entry name" value="Asp/Glu/Uridylate_kinase"/>
</dbReference>
<dbReference type="InterPro" id="IPR041739">
    <property type="entry name" value="G5K_ProB"/>
</dbReference>
<dbReference type="InterPro" id="IPR001057">
    <property type="entry name" value="Glu/AcGlu_kinase"/>
</dbReference>
<dbReference type="InterPro" id="IPR011529">
    <property type="entry name" value="Glu_5kinase"/>
</dbReference>
<dbReference type="InterPro" id="IPR005715">
    <property type="entry name" value="Glu_5kinase/COase_Synthase"/>
</dbReference>
<dbReference type="InterPro" id="IPR019797">
    <property type="entry name" value="Glutamate_5-kinase_CS"/>
</dbReference>
<dbReference type="InterPro" id="IPR002478">
    <property type="entry name" value="PUA"/>
</dbReference>
<dbReference type="InterPro" id="IPR015947">
    <property type="entry name" value="PUA-like_sf"/>
</dbReference>
<dbReference type="InterPro" id="IPR036974">
    <property type="entry name" value="PUA_sf"/>
</dbReference>
<dbReference type="NCBIfam" id="TIGR01027">
    <property type="entry name" value="proB"/>
    <property type="match status" value="1"/>
</dbReference>
<dbReference type="PANTHER" id="PTHR43654">
    <property type="entry name" value="GLUTAMATE 5-KINASE"/>
    <property type="match status" value="1"/>
</dbReference>
<dbReference type="PANTHER" id="PTHR43654:SF1">
    <property type="entry name" value="ISOPENTENYL PHOSPHATE KINASE"/>
    <property type="match status" value="1"/>
</dbReference>
<dbReference type="Pfam" id="PF00696">
    <property type="entry name" value="AA_kinase"/>
    <property type="match status" value="1"/>
</dbReference>
<dbReference type="Pfam" id="PF01472">
    <property type="entry name" value="PUA"/>
    <property type="match status" value="1"/>
</dbReference>
<dbReference type="PIRSF" id="PIRSF000729">
    <property type="entry name" value="GK"/>
    <property type="match status" value="1"/>
</dbReference>
<dbReference type="PRINTS" id="PR00474">
    <property type="entry name" value="GLU5KINASE"/>
</dbReference>
<dbReference type="SMART" id="SM00359">
    <property type="entry name" value="PUA"/>
    <property type="match status" value="1"/>
</dbReference>
<dbReference type="SUPFAM" id="SSF53633">
    <property type="entry name" value="Carbamate kinase-like"/>
    <property type="match status" value="1"/>
</dbReference>
<dbReference type="SUPFAM" id="SSF88697">
    <property type="entry name" value="PUA domain-like"/>
    <property type="match status" value="1"/>
</dbReference>
<dbReference type="PROSITE" id="PS00902">
    <property type="entry name" value="GLUTAMATE_5_KINASE"/>
    <property type="match status" value="1"/>
</dbReference>
<dbReference type="PROSITE" id="PS50890">
    <property type="entry name" value="PUA"/>
    <property type="match status" value="1"/>
</dbReference>
<reference key="1">
    <citation type="journal article" date="2002" name="Proc. Natl. Acad. Sci. U.S.A.">
        <title>The genome sequence of the facultative intracellular pathogen Brucella melitensis.</title>
        <authorList>
            <person name="DelVecchio V.G."/>
            <person name="Kapatral V."/>
            <person name="Redkar R.J."/>
            <person name="Patra G."/>
            <person name="Mujer C."/>
            <person name="Los T."/>
            <person name="Ivanova N."/>
            <person name="Anderson I."/>
            <person name="Bhattacharyya A."/>
            <person name="Lykidis A."/>
            <person name="Reznik G."/>
            <person name="Jablonski L."/>
            <person name="Larsen N."/>
            <person name="D'Souza M."/>
            <person name="Bernal A."/>
            <person name="Mazur M."/>
            <person name="Goltsman E."/>
            <person name="Selkov E."/>
            <person name="Elzer P.H."/>
            <person name="Hagius S."/>
            <person name="O'Callaghan D."/>
            <person name="Letesson J.-J."/>
            <person name="Haselkorn R."/>
            <person name="Kyrpides N.C."/>
            <person name="Overbeek R."/>
        </authorList>
    </citation>
    <scope>NUCLEOTIDE SEQUENCE [LARGE SCALE GENOMIC DNA]</scope>
    <source>
        <strain>ATCC 23456 / CCUG 17765 / NCTC 10094 / 16M</strain>
    </source>
</reference>
<feature type="chain" id="PRO_0000109652" description="Glutamate 5-kinase">
    <location>
        <begin position="1"/>
        <end position="378"/>
    </location>
</feature>
<feature type="domain" description="PUA" evidence="1">
    <location>
        <begin position="279"/>
        <end position="356"/>
    </location>
</feature>
<feature type="binding site" evidence="1">
    <location>
        <position position="14"/>
    </location>
    <ligand>
        <name>ATP</name>
        <dbReference type="ChEBI" id="CHEBI:30616"/>
    </ligand>
</feature>
<feature type="binding site" evidence="1">
    <location>
        <position position="54"/>
    </location>
    <ligand>
        <name>substrate</name>
    </ligand>
</feature>
<feature type="binding site" evidence="1">
    <location>
        <position position="141"/>
    </location>
    <ligand>
        <name>substrate</name>
    </ligand>
</feature>
<feature type="binding site" evidence="1">
    <location>
        <position position="153"/>
    </location>
    <ligand>
        <name>substrate</name>
    </ligand>
</feature>
<feature type="binding site" evidence="1">
    <location>
        <begin position="173"/>
        <end position="174"/>
    </location>
    <ligand>
        <name>ATP</name>
        <dbReference type="ChEBI" id="CHEBI:30616"/>
    </ligand>
</feature>
<organism>
    <name type="scientific">Brucella melitensis biotype 1 (strain ATCC 23456 / CCUG 17765 / NCTC 10094 / 16M)</name>
    <dbReference type="NCBI Taxonomy" id="224914"/>
    <lineage>
        <taxon>Bacteria</taxon>
        <taxon>Pseudomonadati</taxon>
        <taxon>Pseudomonadota</taxon>
        <taxon>Alphaproteobacteria</taxon>
        <taxon>Hyphomicrobiales</taxon>
        <taxon>Brucellaceae</taxon>
        <taxon>Brucella/Ochrobactrum group</taxon>
        <taxon>Brucella</taxon>
    </lineage>
</organism>
<protein>
    <recommendedName>
        <fullName evidence="1">Glutamate 5-kinase</fullName>
        <ecNumber evidence="1">2.7.2.11</ecNumber>
    </recommendedName>
    <alternativeName>
        <fullName evidence="1">Gamma-glutamyl kinase</fullName>
        <shortName evidence="1">GK</shortName>
    </alternativeName>
</protein>
<accession>P65790</accession>
<accession>Q8YJ79</accession>
<proteinExistence type="inferred from homology"/>
<keyword id="KW-0028">Amino-acid biosynthesis</keyword>
<keyword id="KW-0067">ATP-binding</keyword>
<keyword id="KW-0963">Cytoplasm</keyword>
<keyword id="KW-0418">Kinase</keyword>
<keyword id="KW-0547">Nucleotide-binding</keyword>
<keyword id="KW-0641">Proline biosynthesis</keyword>
<keyword id="KW-0808">Transferase</keyword>
<comment type="function">
    <text evidence="1">Catalyzes the transfer of a phosphate group to glutamate to form L-glutamate 5-phosphate.</text>
</comment>
<comment type="catalytic activity">
    <reaction evidence="1">
        <text>L-glutamate + ATP = L-glutamyl 5-phosphate + ADP</text>
        <dbReference type="Rhea" id="RHEA:14877"/>
        <dbReference type="ChEBI" id="CHEBI:29985"/>
        <dbReference type="ChEBI" id="CHEBI:30616"/>
        <dbReference type="ChEBI" id="CHEBI:58274"/>
        <dbReference type="ChEBI" id="CHEBI:456216"/>
        <dbReference type="EC" id="2.7.2.11"/>
    </reaction>
</comment>
<comment type="pathway">
    <text evidence="1">Amino-acid biosynthesis; L-proline biosynthesis; L-glutamate 5-semialdehyde from L-glutamate: step 1/2.</text>
</comment>
<comment type="subcellular location">
    <subcellularLocation>
        <location evidence="1">Cytoplasm</location>
    </subcellularLocation>
</comment>
<comment type="similarity">
    <text evidence="1">Belongs to the glutamate 5-kinase family.</text>
</comment>
<gene>
    <name evidence="1" type="primary">proB</name>
    <name type="ordered locus">BMEI0207</name>
</gene>
<evidence type="ECO:0000255" key="1">
    <source>
        <dbReference type="HAMAP-Rule" id="MF_00456"/>
    </source>
</evidence>
<name>PROB_BRUME</name>
<sequence length="378" mass="39874">MLKKLKDYRRIVVKIGSALLVDRATGLKREWLESLGQDIAALQHAGVEVLVVSSGAIALGRTVLGLPKKALKLEESQAAAAAGQIALAKAYADVLGGHGIKSGQILVTLSDTEERRRYLNARATIETLLKLKAVPIINENDTVATTEIRYGDNDRLAARVATMMGADLLILLSDIDGLYTAPPHKNPDAQFLPFVETITPQIEAMAGAAASELSRGGMKTKLDAGKIANAAGTAMIITSGTRFGPLSAIDRGERATLFEAAHAPVNAWKTWISGNLEPAGRLTVDAGAVKALKSGKSLLPAGVKEVDGDFERGDTVAVMNEDGREIARGLIAYDAADARKVAGHKSDEISAILGYDARAAMIHRNDLVVRAASDAKAA</sequence>